<gene>
    <name type="ordered locus">Memar_0111</name>
</gene>
<comment type="function">
    <text evidence="1">Specifically catalyzes the beta-elimination of phosphate from L-phosphoserine and the beta-addition of sulfite to the dehydroalanine intermediate to produce L-cysteate.</text>
</comment>
<comment type="catalytic activity">
    <reaction evidence="1">
        <text>O-phospho-L-serine + sulfite + H(+) = L-cysteate + phosphate</text>
        <dbReference type="Rhea" id="RHEA:26486"/>
        <dbReference type="ChEBI" id="CHEBI:15378"/>
        <dbReference type="ChEBI" id="CHEBI:17359"/>
        <dbReference type="ChEBI" id="CHEBI:43474"/>
        <dbReference type="ChEBI" id="CHEBI:57524"/>
        <dbReference type="ChEBI" id="CHEBI:58090"/>
        <dbReference type="EC" id="2.5.1.76"/>
    </reaction>
</comment>
<comment type="cofactor">
    <cofactor evidence="1">
        <name>pyridoxal 5'-phosphate</name>
        <dbReference type="ChEBI" id="CHEBI:597326"/>
    </cofactor>
</comment>
<comment type="pathway">
    <text evidence="1">Cofactor biosynthesis; coenzyme M biosynthesis.</text>
</comment>
<comment type="subunit">
    <text evidence="1">Homotrimer.</text>
</comment>
<comment type="similarity">
    <text evidence="1">Belongs to the threonine synthase family. Cysteate synthase subfamily.</text>
</comment>
<organism>
    <name type="scientific">Methanoculleus marisnigri (strain ATCC 35101 / DSM 1498 / JR1)</name>
    <dbReference type="NCBI Taxonomy" id="368407"/>
    <lineage>
        <taxon>Archaea</taxon>
        <taxon>Methanobacteriati</taxon>
        <taxon>Methanobacteriota</taxon>
        <taxon>Stenosarchaea group</taxon>
        <taxon>Methanomicrobia</taxon>
        <taxon>Methanomicrobiales</taxon>
        <taxon>Methanomicrobiaceae</taxon>
        <taxon>Methanoculleus</taxon>
    </lineage>
</organism>
<evidence type="ECO:0000255" key="1">
    <source>
        <dbReference type="HAMAP-Rule" id="MF_02109"/>
    </source>
</evidence>
<protein>
    <recommendedName>
        <fullName evidence="1">Cysteate synthase</fullName>
        <shortName evidence="1">CS</shortName>
        <shortName evidence="1">Cya synthase</shortName>
        <ecNumber evidence="1">2.5.1.76</ecNumber>
    </recommendedName>
</protein>
<reference key="1">
    <citation type="journal article" date="2009" name="Stand. Genomic Sci.">
        <title>Complete genome sequence of Methanoculleus marisnigri Romesser et al. 1981 type strain JR1.</title>
        <authorList>
            <person name="Anderson I.J."/>
            <person name="Sieprawska-Lupa M."/>
            <person name="Lapidus A."/>
            <person name="Nolan M."/>
            <person name="Copeland A."/>
            <person name="Glavina Del Rio T."/>
            <person name="Tice H."/>
            <person name="Dalin E."/>
            <person name="Barry K."/>
            <person name="Saunders E."/>
            <person name="Han C."/>
            <person name="Brettin T."/>
            <person name="Detter J.C."/>
            <person name="Bruce D."/>
            <person name="Mikhailova N."/>
            <person name="Pitluck S."/>
            <person name="Hauser L."/>
            <person name="Land M."/>
            <person name="Lucas S."/>
            <person name="Richardson P."/>
            <person name="Whitman W.B."/>
            <person name="Kyrpides N.C."/>
        </authorList>
    </citation>
    <scope>NUCLEOTIDE SEQUENCE [LARGE SCALE GENOMIC DNA]</scope>
    <source>
        <strain>ATCC 35101 / DSM 1498 / JR1</strain>
    </source>
</reference>
<proteinExistence type="inferred from homology"/>
<feature type="chain" id="PRO_0000392647" description="Cysteate synthase">
    <location>
        <begin position="1"/>
        <end position="430"/>
    </location>
</feature>
<feature type="binding site" evidence="1">
    <location>
        <position position="132"/>
    </location>
    <ligand>
        <name>pyridoxal 5'-phosphate</name>
        <dbReference type="ChEBI" id="CHEBI:597326"/>
    </ligand>
</feature>
<feature type="binding site" evidence="1">
    <location>
        <position position="381"/>
    </location>
    <ligand>
        <name>pyridoxal 5'-phosphate</name>
        <dbReference type="ChEBI" id="CHEBI:597326"/>
    </ligand>
</feature>
<feature type="modified residue" description="N6-(pyridoxal phosphate)lysine" evidence="1">
    <location>
        <position position="106"/>
    </location>
</feature>
<name>CYAS_METMJ</name>
<accession>A3CRP6</accession>
<sequence>MREKYLLHCPGCGRLFPDNYTLDCPLGCNALLRTVYAEHRLTLRDLPGIFRYSSWLPIEGHLRIDAGPVSYASEGLARELGLSNLTVTFSGYWPERGGRMETCSFKELEAQPTVLRLGEKGAGVLQISSAGNTGRAFCQVSALTGAPVVVVVPASAADRLWTTVPAPNVCLITVEGDYSDSIAFGREVCSLPGIVPEGGAKNVARRDGMGTVMLDAALFAGRLPDAYFQAIGSGTGGIAAWEAAERLVADGRFGSRLPTLHLSQNLPFVPMVRAWEAGRREIVPEVDMPDAEASIVRVSADVLTNRHPPWEVRGGVYDALAASGGRMYAVANDDTRSAGRLFEATEEIDLDPAAAVAVASLIRAAEEGFIGPDDHILLNVTGGGYARAAEDLDRYPVEPYLRVRAGEAFAGDVRDAVRGWLAEQEVVVRA</sequence>
<dbReference type="EC" id="2.5.1.76" evidence="1"/>
<dbReference type="EMBL" id="CP000562">
    <property type="protein sequence ID" value="ABN56046.1"/>
    <property type="molecule type" value="Genomic_DNA"/>
</dbReference>
<dbReference type="RefSeq" id="WP_011842967.1">
    <property type="nucleotide sequence ID" value="NC_009051.1"/>
</dbReference>
<dbReference type="SMR" id="A3CRP6"/>
<dbReference type="STRING" id="368407.Memar_0111"/>
<dbReference type="GeneID" id="4845938"/>
<dbReference type="KEGG" id="mem:Memar_0111"/>
<dbReference type="eggNOG" id="arCOG01434">
    <property type="taxonomic scope" value="Archaea"/>
</dbReference>
<dbReference type="HOGENOM" id="CLU_666687_0_0_2"/>
<dbReference type="OrthoDB" id="6371at2157"/>
<dbReference type="UniPathway" id="UPA00355"/>
<dbReference type="Proteomes" id="UP000002146">
    <property type="component" value="Chromosome"/>
</dbReference>
<dbReference type="GO" id="GO:0044686">
    <property type="term" value="F:cysteate synthase activity"/>
    <property type="evidence" value="ECO:0007669"/>
    <property type="project" value="UniProtKB-UniRule"/>
</dbReference>
<dbReference type="GO" id="GO:0030170">
    <property type="term" value="F:pyridoxal phosphate binding"/>
    <property type="evidence" value="ECO:0007669"/>
    <property type="project" value="UniProtKB-UniRule"/>
</dbReference>
<dbReference type="GO" id="GO:0019295">
    <property type="term" value="P:coenzyme M biosynthetic process"/>
    <property type="evidence" value="ECO:0007669"/>
    <property type="project" value="UniProtKB-UniRule"/>
</dbReference>
<dbReference type="Gene3D" id="3.40.50.1100">
    <property type="match status" value="2"/>
</dbReference>
<dbReference type="HAMAP" id="MF_02109">
    <property type="entry name" value="Cya_synthase"/>
    <property type="match status" value="1"/>
</dbReference>
<dbReference type="InterPro" id="IPR022401">
    <property type="entry name" value="Cysteate_synthase"/>
</dbReference>
<dbReference type="InterPro" id="IPR001926">
    <property type="entry name" value="TrpB-like_PALP"/>
</dbReference>
<dbReference type="InterPro" id="IPR036052">
    <property type="entry name" value="TrpB-like_PALP_sf"/>
</dbReference>
<dbReference type="NCBIfam" id="TIGR03844">
    <property type="entry name" value="cysteate_syn"/>
    <property type="match status" value="1"/>
</dbReference>
<dbReference type="Pfam" id="PF00291">
    <property type="entry name" value="PALP"/>
    <property type="match status" value="1"/>
</dbReference>
<dbReference type="SUPFAM" id="SSF53686">
    <property type="entry name" value="Tryptophan synthase beta subunit-like PLP-dependent enzymes"/>
    <property type="match status" value="1"/>
</dbReference>
<keyword id="KW-0174">Coenzyme M biosynthesis</keyword>
<keyword id="KW-0663">Pyridoxal phosphate</keyword>
<keyword id="KW-0808">Transferase</keyword>